<dbReference type="EC" id="6.3.2.4" evidence="2"/>
<dbReference type="EMBL" id="CP000141">
    <property type="protein sequence ID" value="ABB14185.1"/>
    <property type="molecule type" value="Genomic_DNA"/>
</dbReference>
<dbReference type="RefSeq" id="WP_011344255.1">
    <property type="nucleotide sequence ID" value="NC_007503.1"/>
</dbReference>
<dbReference type="SMR" id="Q3ACF5"/>
<dbReference type="FunCoup" id="Q3ACF5">
    <property type="interactions" value="298"/>
</dbReference>
<dbReference type="STRING" id="246194.CHY_1346"/>
<dbReference type="KEGG" id="chy:CHY_1346"/>
<dbReference type="eggNOG" id="COG1181">
    <property type="taxonomic scope" value="Bacteria"/>
</dbReference>
<dbReference type="HOGENOM" id="CLU_039268_2_0_9"/>
<dbReference type="InParanoid" id="Q3ACF5"/>
<dbReference type="OrthoDB" id="9813261at2"/>
<dbReference type="UniPathway" id="UPA00219"/>
<dbReference type="Proteomes" id="UP000002706">
    <property type="component" value="Chromosome"/>
</dbReference>
<dbReference type="GO" id="GO:0005737">
    <property type="term" value="C:cytoplasm"/>
    <property type="evidence" value="ECO:0007669"/>
    <property type="project" value="UniProtKB-SubCell"/>
</dbReference>
<dbReference type="GO" id="GO:0005524">
    <property type="term" value="F:ATP binding"/>
    <property type="evidence" value="ECO:0007669"/>
    <property type="project" value="UniProtKB-KW"/>
</dbReference>
<dbReference type="GO" id="GO:0008716">
    <property type="term" value="F:D-alanine-D-alanine ligase activity"/>
    <property type="evidence" value="ECO:0007669"/>
    <property type="project" value="UniProtKB-UniRule"/>
</dbReference>
<dbReference type="GO" id="GO:0046872">
    <property type="term" value="F:metal ion binding"/>
    <property type="evidence" value="ECO:0007669"/>
    <property type="project" value="UniProtKB-KW"/>
</dbReference>
<dbReference type="GO" id="GO:0071555">
    <property type="term" value="P:cell wall organization"/>
    <property type="evidence" value="ECO:0007669"/>
    <property type="project" value="UniProtKB-KW"/>
</dbReference>
<dbReference type="GO" id="GO:0009252">
    <property type="term" value="P:peptidoglycan biosynthetic process"/>
    <property type="evidence" value="ECO:0007669"/>
    <property type="project" value="UniProtKB-UniRule"/>
</dbReference>
<dbReference type="GO" id="GO:0008360">
    <property type="term" value="P:regulation of cell shape"/>
    <property type="evidence" value="ECO:0007669"/>
    <property type="project" value="UniProtKB-KW"/>
</dbReference>
<dbReference type="FunFam" id="3.30.470.20:FF:000008">
    <property type="entry name" value="D-alanine--D-alanine ligase"/>
    <property type="match status" value="1"/>
</dbReference>
<dbReference type="Gene3D" id="3.40.50.20">
    <property type="match status" value="1"/>
</dbReference>
<dbReference type="Gene3D" id="3.30.1490.20">
    <property type="entry name" value="ATP-grasp fold, A domain"/>
    <property type="match status" value="1"/>
</dbReference>
<dbReference type="Gene3D" id="3.30.470.20">
    <property type="entry name" value="ATP-grasp fold, B domain"/>
    <property type="match status" value="1"/>
</dbReference>
<dbReference type="HAMAP" id="MF_00047">
    <property type="entry name" value="Dala_Dala_lig"/>
    <property type="match status" value="1"/>
</dbReference>
<dbReference type="InterPro" id="IPR011761">
    <property type="entry name" value="ATP-grasp"/>
</dbReference>
<dbReference type="InterPro" id="IPR013815">
    <property type="entry name" value="ATP_grasp_subdomain_1"/>
</dbReference>
<dbReference type="InterPro" id="IPR000291">
    <property type="entry name" value="D-Ala_lig_Van_CS"/>
</dbReference>
<dbReference type="InterPro" id="IPR005905">
    <property type="entry name" value="D_ala_D_ala"/>
</dbReference>
<dbReference type="InterPro" id="IPR011095">
    <property type="entry name" value="Dala_Dala_lig_C"/>
</dbReference>
<dbReference type="InterPro" id="IPR011127">
    <property type="entry name" value="Dala_Dala_lig_N"/>
</dbReference>
<dbReference type="InterPro" id="IPR016185">
    <property type="entry name" value="PreATP-grasp_dom_sf"/>
</dbReference>
<dbReference type="NCBIfam" id="TIGR01205">
    <property type="entry name" value="D_ala_D_alaTIGR"/>
    <property type="match status" value="1"/>
</dbReference>
<dbReference type="NCBIfam" id="NF002378">
    <property type="entry name" value="PRK01372.1"/>
    <property type="match status" value="1"/>
</dbReference>
<dbReference type="NCBIfam" id="NF002528">
    <property type="entry name" value="PRK01966.1-4"/>
    <property type="match status" value="1"/>
</dbReference>
<dbReference type="PANTHER" id="PTHR23132">
    <property type="entry name" value="D-ALANINE--D-ALANINE LIGASE"/>
    <property type="match status" value="1"/>
</dbReference>
<dbReference type="PANTHER" id="PTHR23132:SF23">
    <property type="entry name" value="D-ALANINE--D-ALANINE LIGASE B"/>
    <property type="match status" value="1"/>
</dbReference>
<dbReference type="Pfam" id="PF07478">
    <property type="entry name" value="Dala_Dala_lig_C"/>
    <property type="match status" value="1"/>
</dbReference>
<dbReference type="Pfam" id="PF01820">
    <property type="entry name" value="Dala_Dala_lig_N"/>
    <property type="match status" value="2"/>
</dbReference>
<dbReference type="PIRSF" id="PIRSF039102">
    <property type="entry name" value="Ddl/VanB"/>
    <property type="match status" value="1"/>
</dbReference>
<dbReference type="SMART" id="SM01209">
    <property type="entry name" value="GARS_A"/>
    <property type="match status" value="1"/>
</dbReference>
<dbReference type="SUPFAM" id="SSF56059">
    <property type="entry name" value="Glutathione synthetase ATP-binding domain-like"/>
    <property type="match status" value="1"/>
</dbReference>
<dbReference type="SUPFAM" id="SSF52440">
    <property type="entry name" value="PreATP-grasp domain"/>
    <property type="match status" value="1"/>
</dbReference>
<dbReference type="PROSITE" id="PS50975">
    <property type="entry name" value="ATP_GRASP"/>
    <property type="match status" value="1"/>
</dbReference>
<dbReference type="PROSITE" id="PS00843">
    <property type="entry name" value="DALA_DALA_LIGASE_1"/>
    <property type="match status" value="1"/>
</dbReference>
<dbReference type="PROSITE" id="PS00844">
    <property type="entry name" value="DALA_DALA_LIGASE_2"/>
    <property type="match status" value="1"/>
</dbReference>
<keyword id="KW-0067">ATP-binding</keyword>
<keyword id="KW-0133">Cell shape</keyword>
<keyword id="KW-0961">Cell wall biogenesis/degradation</keyword>
<keyword id="KW-0963">Cytoplasm</keyword>
<keyword id="KW-0436">Ligase</keyword>
<keyword id="KW-0460">Magnesium</keyword>
<keyword id="KW-0464">Manganese</keyword>
<keyword id="KW-0479">Metal-binding</keyword>
<keyword id="KW-0547">Nucleotide-binding</keyword>
<keyword id="KW-0573">Peptidoglycan synthesis</keyword>
<keyword id="KW-1185">Reference proteome</keyword>
<evidence type="ECO:0000250" key="1"/>
<evidence type="ECO:0000255" key="2">
    <source>
        <dbReference type="HAMAP-Rule" id="MF_00047"/>
    </source>
</evidence>
<name>DDL_CARHZ</name>
<feature type="chain" id="PRO_1000030435" description="D-alanine--D-alanine ligase">
    <location>
        <begin position="1"/>
        <end position="312"/>
    </location>
</feature>
<feature type="domain" description="ATP-grasp" evidence="2">
    <location>
        <begin position="99"/>
        <end position="304"/>
    </location>
</feature>
<feature type="binding site" evidence="2">
    <location>
        <begin position="131"/>
        <end position="186"/>
    </location>
    <ligand>
        <name>ATP</name>
        <dbReference type="ChEBI" id="CHEBI:30616"/>
    </ligand>
</feature>
<feature type="binding site" evidence="2">
    <location>
        <position position="257"/>
    </location>
    <ligand>
        <name>Mg(2+)</name>
        <dbReference type="ChEBI" id="CHEBI:18420"/>
        <label>1</label>
    </ligand>
</feature>
<feature type="binding site" evidence="2">
    <location>
        <position position="271"/>
    </location>
    <ligand>
        <name>Mg(2+)</name>
        <dbReference type="ChEBI" id="CHEBI:18420"/>
        <label>1</label>
    </ligand>
</feature>
<feature type="binding site" evidence="2">
    <location>
        <position position="271"/>
    </location>
    <ligand>
        <name>Mg(2+)</name>
        <dbReference type="ChEBI" id="CHEBI:18420"/>
        <label>2</label>
    </ligand>
</feature>
<feature type="binding site" evidence="2">
    <location>
        <position position="273"/>
    </location>
    <ligand>
        <name>Mg(2+)</name>
        <dbReference type="ChEBI" id="CHEBI:18420"/>
        <label>2</label>
    </ligand>
</feature>
<protein>
    <recommendedName>
        <fullName evidence="2">D-alanine--D-alanine ligase</fullName>
        <ecNumber evidence="2">6.3.2.4</ecNumber>
    </recommendedName>
    <alternativeName>
        <fullName evidence="2">D-Ala-D-Ala ligase</fullName>
    </alternativeName>
    <alternativeName>
        <fullName evidence="2">D-alanylalanine synthetase</fullName>
    </alternativeName>
</protein>
<accession>Q3ACF5</accession>
<comment type="function">
    <text evidence="2">Cell wall formation.</text>
</comment>
<comment type="catalytic activity">
    <reaction evidence="2">
        <text>2 D-alanine + ATP = D-alanyl-D-alanine + ADP + phosphate + H(+)</text>
        <dbReference type="Rhea" id="RHEA:11224"/>
        <dbReference type="ChEBI" id="CHEBI:15378"/>
        <dbReference type="ChEBI" id="CHEBI:30616"/>
        <dbReference type="ChEBI" id="CHEBI:43474"/>
        <dbReference type="ChEBI" id="CHEBI:57416"/>
        <dbReference type="ChEBI" id="CHEBI:57822"/>
        <dbReference type="ChEBI" id="CHEBI:456216"/>
        <dbReference type="EC" id="6.3.2.4"/>
    </reaction>
</comment>
<comment type="cofactor">
    <cofactor evidence="1">
        <name>Mg(2+)</name>
        <dbReference type="ChEBI" id="CHEBI:18420"/>
    </cofactor>
    <cofactor evidence="1">
        <name>Mn(2+)</name>
        <dbReference type="ChEBI" id="CHEBI:29035"/>
    </cofactor>
    <text evidence="1">Binds 2 magnesium or manganese ions per subunit.</text>
</comment>
<comment type="pathway">
    <text evidence="2">Cell wall biogenesis; peptidoglycan biosynthesis.</text>
</comment>
<comment type="subcellular location">
    <subcellularLocation>
        <location evidence="2">Cytoplasm</location>
    </subcellularLocation>
</comment>
<comment type="similarity">
    <text evidence="2">Belongs to the D-alanine--D-alanine ligase family.</text>
</comment>
<reference key="1">
    <citation type="journal article" date="2005" name="PLoS Genet.">
        <title>Life in hot carbon monoxide: the complete genome sequence of Carboxydothermus hydrogenoformans Z-2901.</title>
        <authorList>
            <person name="Wu M."/>
            <person name="Ren Q."/>
            <person name="Durkin A.S."/>
            <person name="Daugherty S.C."/>
            <person name="Brinkac L.M."/>
            <person name="Dodson R.J."/>
            <person name="Madupu R."/>
            <person name="Sullivan S.A."/>
            <person name="Kolonay J.F."/>
            <person name="Nelson W.C."/>
            <person name="Tallon L.J."/>
            <person name="Jones K.M."/>
            <person name="Ulrich L.E."/>
            <person name="Gonzalez J.M."/>
            <person name="Zhulin I.B."/>
            <person name="Robb F.T."/>
            <person name="Eisen J.A."/>
        </authorList>
    </citation>
    <scope>NUCLEOTIDE SEQUENCE [LARGE SCALE GENOMIC DNA]</scope>
    <source>
        <strain>ATCC BAA-161 / DSM 6008 / Z-2901</strain>
    </source>
</reference>
<gene>
    <name evidence="2" type="primary">ddl</name>
    <name type="ordered locus">CHY_1346</name>
</gene>
<proteinExistence type="inferred from homology"/>
<organism>
    <name type="scientific">Carboxydothermus hydrogenoformans (strain ATCC BAA-161 / DSM 6008 / Z-2901)</name>
    <dbReference type="NCBI Taxonomy" id="246194"/>
    <lineage>
        <taxon>Bacteria</taxon>
        <taxon>Bacillati</taxon>
        <taxon>Bacillota</taxon>
        <taxon>Clostridia</taxon>
        <taxon>Thermoanaerobacterales</taxon>
        <taxon>Thermoanaerobacteraceae</taxon>
        <taxon>Carboxydothermus</taxon>
    </lineage>
</organism>
<sequence>MKIGVICGGLSSEREVSLRTGDAIFRALLKKGYNVVKIDMDRNIAETLKKENIDFAFIALHGKYGEDGAIQGLLEIMDIPYTGSGILASSLAIDKIMTKKILKAEGIPTPNYIAFSFDENPNFEAISSEILQTLKLPVVIKAPREGSTIGIEFVFSKQELPKAIKKVLEIDKQLLVEEFIEGVEVTASVLGNSNPVVLPLIEIVSKTRFYDYEAKYTPGLSEHIIPPRIAPELSQKAIEYARKTYKALGCRGFARVDFMIDVRKNEAYVLEVNTIPGMTATSLFPDAAKAQGISFEDLVEKILMLGLEGRQK</sequence>